<organism>
    <name type="scientific">Enterobacter sp. (strain 638)</name>
    <dbReference type="NCBI Taxonomy" id="399742"/>
    <lineage>
        <taxon>Bacteria</taxon>
        <taxon>Pseudomonadati</taxon>
        <taxon>Pseudomonadota</taxon>
        <taxon>Gammaproteobacteria</taxon>
        <taxon>Enterobacterales</taxon>
        <taxon>Enterobacteriaceae</taxon>
        <taxon>Enterobacter</taxon>
    </lineage>
</organism>
<comment type="function">
    <text evidence="1">Part of the ABC transporter complex LsrABCD involved in autoinducer 2 (AI-2) import. Binds AI-2 and delivers it to the LsrC and LsrD permeases (By similarity).</text>
</comment>
<comment type="subunit">
    <text evidence="1">The complex is composed of two ATP-binding proteins (LsrA), two transmembrane proteins (LsrC and LsrD) and a solute-binding protein (LsrB).</text>
</comment>
<comment type="subcellular location">
    <subcellularLocation>
        <location evidence="3">Periplasm</location>
    </subcellularLocation>
</comment>
<comment type="similarity">
    <text evidence="3">Belongs to the bacterial solute-binding protein 2 family.</text>
</comment>
<feature type="signal peptide" evidence="2">
    <location>
        <begin position="1"/>
        <end position="19"/>
    </location>
</feature>
<feature type="chain" id="PRO_5000238166" description="Autoinducer 2-binding protein LsrB">
    <location>
        <begin position="20"/>
        <end position="333"/>
    </location>
</feature>
<dbReference type="EMBL" id="CP000653">
    <property type="protein sequence ID" value="ABP62191.1"/>
    <property type="molecule type" value="Genomic_DNA"/>
</dbReference>
<dbReference type="RefSeq" id="WP_015960517.1">
    <property type="nucleotide sequence ID" value="NC_009436.1"/>
</dbReference>
<dbReference type="SMR" id="A4WER1"/>
<dbReference type="STRING" id="399742.Ent638_3533"/>
<dbReference type="KEGG" id="ent:Ent638_3533"/>
<dbReference type="eggNOG" id="COG1879">
    <property type="taxonomic scope" value="Bacteria"/>
</dbReference>
<dbReference type="HOGENOM" id="CLU_037628_3_0_6"/>
<dbReference type="OrthoDB" id="9781890at2"/>
<dbReference type="Proteomes" id="UP000000230">
    <property type="component" value="Chromosome"/>
</dbReference>
<dbReference type="GO" id="GO:0043190">
    <property type="term" value="C:ATP-binding cassette (ABC) transporter complex"/>
    <property type="evidence" value="ECO:0007669"/>
    <property type="project" value="InterPro"/>
</dbReference>
<dbReference type="GO" id="GO:0030288">
    <property type="term" value="C:outer membrane-bounded periplasmic space"/>
    <property type="evidence" value="ECO:0007669"/>
    <property type="project" value="TreeGrafter"/>
</dbReference>
<dbReference type="GO" id="GO:0030246">
    <property type="term" value="F:carbohydrate binding"/>
    <property type="evidence" value="ECO:0007669"/>
    <property type="project" value="TreeGrafter"/>
</dbReference>
<dbReference type="CDD" id="cd20003">
    <property type="entry name" value="PBP1_LsrB_Quorum_Sensing"/>
    <property type="match status" value="1"/>
</dbReference>
<dbReference type="Gene3D" id="3.40.50.2300">
    <property type="match status" value="2"/>
</dbReference>
<dbReference type="InterPro" id="IPR050555">
    <property type="entry name" value="Bact_Solute-Bind_Prot2"/>
</dbReference>
<dbReference type="InterPro" id="IPR030159">
    <property type="entry name" value="LsrB"/>
</dbReference>
<dbReference type="InterPro" id="IPR028082">
    <property type="entry name" value="Peripla_BP_I"/>
</dbReference>
<dbReference type="InterPro" id="IPR025997">
    <property type="entry name" value="SBP_2_dom"/>
</dbReference>
<dbReference type="NCBIfam" id="NF011937">
    <property type="entry name" value="PRK15408.1"/>
    <property type="match status" value="1"/>
</dbReference>
<dbReference type="PANTHER" id="PTHR30036:SF7">
    <property type="entry name" value="ABC TRANSPORTER PERIPLASMIC-BINDING PROTEIN YPHF"/>
    <property type="match status" value="1"/>
</dbReference>
<dbReference type="PANTHER" id="PTHR30036">
    <property type="entry name" value="D-XYLOSE-BINDING PERIPLASMIC PROTEIN"/>
    <property type="match status" value="1"/>
</dbReference>
<dbReference type="Pfam" id="PF13407">
    <property type="entry name" value="Peripla_BP_4"/>
    <property type="match status" value="1"/>
</dbReference>
<dbReference type="SUPFAM" id="SSF53822">
    <property type="entry name" value="Periplasmic binding protein-like I"/>
    <property type="match status" value="1"/>
</dbReference>
<name>LSRB_ENT38</name>
<protein>
    <recommendedName>
        <fullName>Autoinducer 2-binding protein LsrB</fullName>
        <shortName>AI-2-binding protein LsrB</shortName>
    </recommendedName>
</protein>
<evidence type="ECO:0000250" key="1"/>
<evidence type="ECO:0000255" key="2"/>
<evidence type="ECO:0000305" key="3"/>
<gene>
    <name type="primary">lsrB</name>
    <name type="ordered locus">Ent638_3533</name>
</gene>
<keyword id="KW-0574">Periplasm</keyword>
<keyword id="KW-0732">Signal</keyword>
<proteinExistence type="inferred from homology"/>
<reference key="1">
    <citation type="journal article" date="2010" name="PLoS Genet.">
        <title>Genome sequence of the plant growth promoting endophytic bacterium Enterobacter sp. 638.</title>
        <authorList>
            <person name="Taghavi S."/>
            <person name="van der Lelie D."/>
            <person name="Hoffman A."/>
            <person name="Zhang Y.B."/>
            <person name="Walla M.D."/>
            <person name="Vangronsveld J."/>
            <person name="Newman L."/>
            <person name="Monchy S."/>
        </authorList>
    </citation>
    <scope>NUCLEOTIDE SEQUENCE [LARGE SCALE GENOMIC DNA]</scope>
    <source>
        <strain>638</strain>
    </source>
</reference>
<sequence>MKTKLLVLAVALSVASAQAADRIAFIPKLVGVGFFTSGGNGAKEAGKELGVDVTYDGPTEPSVSGQVQLINNFVNQGFNAIIVSAVSPDGLCPALKRAMQRGVKVLTWDSDTKPECRSIYINQGTPEQLGSLLVDMASKQVTKPAAKVAFFYSSPTVTDQNQWVKEAKAKIEKEHPQWQVVTTQFGYNDATKSLQTAEGILKAYPDLDAIIAPDANALPAAAQATENLKREGVAIVGFSTPNVMRPYVERGTVKAFGLWDVVQQGKIAVNVADHLLKKGDLNVGDSVDVKGIGVLKVEPNSVQGYQYEAKGNGIVLLPERVVFTKENIDKYDF</sequence>
<accession>A4WER1</accession>